<sequence>MSTTPTITLADLERIREPYKVLSKTARPENPSGQCTYREYLFSDAVKYPIYKRATMTNEEIVTFFGKITSDKHTHMTESDMWTFVQCALSLKDPVDRSSIFDKGFWDANHLCADYATAQPANTGKVAMSHHNPGVVVTQLVPKYDTGGSSSQETESMASKAEAISFYFAWLTRFSVKQAPNTINVLYDRVRATYLKFYSTSSSIFDTFRPSNTWLQGLKDAFDTFPRVKNTLILHVAHAETYFRPTPKIFNVLRFLFFQNLEFMGLHAYVSIVTIMSKVALPPSQVLSWLRVSGSEMAIDEAFMIMNTLDNGMIDNGHNAERLWKYARCLDQGYFNRLQSSYSAELIAMLAYIEINMGISTEVGYNSPLNIYAIANNKAVKEVGRMKADVFIQCKNSVVSLTQDASVIDKVYAAAQQKHIRSEEAARPSEQNKEDEVVAMDTDAPSRKRRSDALTTEKPKKALPAIIKLPNIPDF</sequence>
<protein>
    <recommendedName>
        <fullName>Nucleoprotein</fullName>
        <shortName>NP</shortName>
    </recommendedName>
    <alternativeName>
        <fullName>Nucleocapsid protein</fullName>
        <shortName>Protein N</shortName>
    </alternativeName>
</protein>
<name>NCAP_SYNV</name>
<feature type="chain" id="PRO_0000222824" description="Nucleoprotein">
    <location>
        <begin position="1"/>
        <end position="475"/>
    </location>
</feature>
<feature type="region of interest" description="Disordered" evidence="1">
    <location>
        <begin position="421"/>
        <end position="461"/>
    </location>
</feature>
<feature type="compositionally biased region" description="Basic and acidic residues" evidence="1">
    <location>
        <begin position="421"/>
        <end position="436"/>
    </location>
</feature>
<feature type="compositionally biased region" description="Basic and acidic residues" evidence="1">
    <location>
        <begin position="451"/>
        <end position="460"/>
    </location>
</feature>
<dbReference type="EMBL" id="L32603">
    <property type="protein sequence ID" value="AAA50380.1"/>
    <property type="molecule type" value="mRNA"/>
</dbReference>
<dbReference type="EMBL" id="M17210">
    <property type="protein sequence ID" value="AAA47895.1"/>
    <property type="molecule type" value="Genomic_RNA"/>
</dbReference>
<dbReference type="PIR" id="A29123">
    <property type="entry name" value="VHVNSY"/>
</dbReference>
<dbReference type="RefSeq" id="NP_042281.3">
    <property type="nucleotide sequence ID" value="NC_001615.3"/>
</dbReference>
<dbReference type="GeneID" id="1489877"/>
<dbReference type="KEGG" id="vg:1489877"/>
<dbReference type="OrthoDB" id="27697at10239"/>
<dbReference type="Proteomes" id="UP000002326">
    <property type="component" value="Genome"/>
</dbReference>
<dbReference type="GO" id="GO:0019029">
    <property type="term" value="C:helical viral capsid"/>
    <property type="evidence" value="ECO:0007669"/>
    <property type="project" value="UniProtKB-KW"/>
</dbReference>
<dbReference type="GO" id="GO:1990904">
    <property type="term" value="C:ribonucleoprotein complex"/>
    <property type="evidence" value="ECO:0007669"/>
    <property type="project" value="UniProtKB-KW"/>
</dbReference>
<dbReference type="GO" id="GO:0019013">
    <property type="term" value="C:viral nucleocapsid"/>
    <property type="evidence" value="ECO:0007669"/>
    <property type="project" value="UniProtKB-KW"/>
</dbReference>
<dbReference type="GO" id="GO:0003723">
    <property type="term" value="F:RNA binding"/>
    <property type="evidence" value="ECO:0007669"/>
    <property type="project" value="UniProtKB-KW"/>
</dbReference>
<dbReference type="InterPro" id="IPR004902">
    <property type="entry name" value="Rhabdo_ncap_2"/>
</dbReference>
<dbReference type="Pfam" id="PF03216">
    <property type="entry name" value="Rhabdo_ncap_2"/>
    <property type="match status" value="1"/>
</dbReference>
<comment type="subcellular location">
    <subcellularLocation>
        <location evidence="2">Virion</location>
    </subcellularLocation>
</comment>
<comment type="similarity">
    <text evidence="2">Belongs to the nucleorhabdovirus nucleocapsid protein family.</text>
</comment>
<keyword id="KW-0167">Capsid protein</keyword>
<keyword id="KW-1139">Helical capsid protein</keyword>
<keyword id="KW-1185">Reference proteome</keyword>
<keyword id="KW-0687">Ribonucleoprotein</keyword>
<keyword id="KW-0694">RNA-binding</keyword>
<keyword id="KW-0543">Viral nucleoprotein</keyword>
<keyword id="KW-0946">Virion</keyword>
<accession>P10550</accession>
<organismHost>
    <name type="scientific">Aphis</name>
    <dbReference type="NCBI Taxonomy" id="80764"/>
</organismHost>
<organismHost>
    <name type="scientific">Bidens pilosa</name>
    <name type="common">Hairy beggarticks</name>
    <name type="synonym">Cobbler's pegs</name>
    <dbReference type="NCBI Taxonomy" id="42337"/>
</organismHost>
<organismHost>
    <name type="scientific">Lactuca sativa</name>
    <name type="common">Garden lettuce</name>
    <dbReference type="NCBI Taxonomy" id="4236"/>
</organismHost>
<organismHost>
    <name type="scientific">Sonchus oleraceus</name>
    <name type="common">Common sowthistle</name>
    <dbReference type="NCBI Taxonomy" id="50207"/>
</organismHost>
<reference key="1">
    <citation type="journal article" date="1987" name="Virology">
        <title>Structure of the nucleocapsid protein gene of Sonchus yellow net virus.</title>
        <authorList>
            <person name="Zuidema D."/>
            <person name="Heaton L.A."/>
            <person name="Jackson A.O."/>
        </authorList>
    </citation>
    <scope>NUCLEOTIDE SEQUENCE [MRNA]</scope>
    <source>
        <strain>ATCC PV-263</strain>
    </source>
</reference>
<gene>
    <name type="primary">N</name>
</gene>
<proteinExistence type="evidence at transcript level"/>
<organism>
    <name type="scientific">Sonchus yellow net virus</name>
    <name type="common">SYNV</name>
    <dbReference type="NCBI Taxonomy" id="11307"/>
    <lineage>
        <taxon>Viruses</taxon>
        <taxon>Riboviria</taxon>
        <taxon>Orthornavirae</taxon>
        <taxon>Negarnaviricota</taxon>
        <taxon>Haploviricotina</taxon>
        <taxon>Monjiviricetes</taxon>
        <taxon>Mononegavirales</taxon>
        <taxon>Rhabdoviridae</taxon>
        <taxon>Betarhabdovirinae</taxon>
        <taxon>Betanucleorhabdovirus</taxon>
        <taxon>Betanucleorhabdovirus retesonchi</taxon>
    </lineage>
</organism>
<evidence type="ECO:0000256" key="1">
    <source>
        <dbReference type="SAM" id="MobiDB-lite"/>
    </source>
</evidence>
<evidence type="ECO:0000305" key="2"/>